<evidence type="ECO:0000255" key="1"/>
<evidence type="ECO:0000255" key="2">
    <source>
        <dbReference type="PROSITE-ProRule" id="PRU00434"/>
    </source>
</evidence>
<evidence type="ECO:0000256" key="3">
    <source>
        <dbReference type="SAM" id="MobiDB-lite"/>
    </source>
</evidence>
<evidence type="ECO:0000305" key="4"/>
<proteinExistence type="inferred from homology"/>
<protein>
    <recommendedName>
        <fullName>ABC transporter G family member 17</fullName>
    </recommendedName>
    <alternativeName>
        <fullName>ABC transporter ABCG.17</fullName>
    </alternativeName>
</protein>
<sequence>MEEDKTFQSIRISENNNNNNNNNNNNNNNNNNNLNNNNDNDYDYDSINNIEEKFENVSKELEGQSIKFREIDGGKNNNNHDIELGERKPENEEDFKLRQYFEDSQRQKMLINHKPKKMGVSIKNLTVVGQGADNSVIVDNSTPFKALGKLLNPFNYFKKDKNKINTFNILNDINAFIEDGKMLLVLGRPGAGCSTLLRVIANQRESYISVDGDVTYGNIAASDWSKYRGETLYTGEEDIHHPTLTVRETLDFTLKLKTPGNRLPEESKRNFRTKIYELLVSMYGLVNQGDTMVGNEFVRGLSGGERKRITITEAMVSGSSITCWDCSTRGLDAASAYDYAKSLRIMSDTLDKTTIASFYQASDSIYNLFDKVIVLDKGRCIYFGPIGLAKQYFLDLGFDCEPRKSTPDFLTGITNPQERIVKVGFEGRVPETSVDLEDAWKKSQLFQSMKHAQLEYEKQVEQQKPSVDFKEQVLNEKSRTTSKNSEYSSSFYAQTIALTQRQLSLTWGDKFTLTSRFLTILVLSFIFGGIYFQQPLTTDGLFTRGGAIFTSIIFNCILTQGELHGALSGRRILQKHKSYALYRPSAYFVSQILIDIPFILVQVFLHSFIVYFMYGFEYRADKFFIFCFTLVGVSLSSASLFRGFANFTPSLFTAQNLMNFVFIFEVNYFGYSQTPDKMHSWFKWTYYINPLAYAFKSLMINEFKGLDFSCLDSAIPFDHFNNSTYSDMSHRICAVPGSIEGSLSVKGENYLWDALQINSDHRALNVVVIFLFWLFYIGLNLFAVEYFDWTSGGYTHKVYKRGKAPKLNDVEEERNQNQIVKKATDNMKDTLKMRGGLFSWKSISYTVPVAGTNKLLLDDIMGWIKPGQMTALMGSSGAGKTTLLDVLAKRKTMGTVTGESLLNGKQLEIDFERITGYVEQMDVHNPGLTVREALRFSAKLRQEPWVPLKDKYQYVEHVLEMMEMKHLGDALIGTLETGVGISVEERKRLTIGVELVAKPQILFLDEPTSGLDAQSSYNIIKFIRKLADAGMPLVCTIHQPSSVLFEHFDRILLLARGGKTVYFGDIGDKSKTLTSYFERHGVRPCTESENPAEYILEATGAGIHGKTDVNWPEAWKQSSEYQNVVNELDLLRTKEELGKYILDSDLQVDGKQAPPREFANGFLTQFIEVYKRLNIIYYRDVFYTMGSFAQSAVSGLVIGFTFYDLKNSSSDQQQRIFMSWEAMILGVLLIYLVLPMFFIQKEYFKRDTASKYYSWHAFSLSMIAVEIPYVVLSSTLFFIATYWTSGIDSTASANFYYWLMHTMFSVYIVSFAQALGAACVNIAISIAALPIVLFYLFLLCGVQIPPPAMSSFYQDWLYHLNPAKYFLEGLITTVLKPIEVLCTDVDLIKFTAPSGTDCQTYSAPFLQQATGYVVPLSNTTNECGYCIYSSGSDYFETSLGWDYGHRWRNFGIIVAYWGSSILAVLFFVYLTQKPRR</sequence>
<gene>
    <name type="primary">abcG17-1</name>
    <name type="ORF">DDB_G0273073</name>
</gene>
<gene>
    <name type="primary">abcG17-2</name>
    <name type="ORF">DDB_G0273781</name>
</gene>
<organism>
    <name type="scientific">Dictyostelium discoideum</name>
    <name type="common">Social amoeba</name>
    <dbReference type="NCBI Taxonomy" id="44689"/>
    <lineage>
        <taxon>Eukaryota</taxon>
        <taxon>Amoebozoa</taxon>
        <taxon>Evosea</taxon>
        <taxon>Eumycetozoa</taxon>
        <taxon>Dictyostelia</taxon>
        <taxon>Dictyosteliales</taxon>
        <taxon>Dictyosteliaceae</taxon>
        <taxon>Dictyostelium</taxon>
    </lineage>
</organism>
<dbReference type="EMBL" id="AF482395">
    <property type="protein sequence ID" value="AAL91502.1"/>
    <property type="molecule type" value="Genomic_DNA"/>
</dbReference>
<dbReference type="EMBL" id="AAFI02000011">
    <property type="protein sequence ID" value="EAL70581.1"/>
    <property type="molecule type" value="Genomic_DNA"/>
</dbReference>
<dbReference type="EMBL" id="AAFI02000009">
    <property type="protein sequence ID" value="EAL70754.1"/>
    <property type="molecule type" value="Genomic_DNA"/>
</dbReference>
<dbReference type="RefSeq" id="XP_644507.1">
    <property type="nucleotide sequence ID" value="XM_639415.1"/>
</dbReference>
<dbReference type="RefSeq" id="XP_644743.1">
    <property type="nucleotide sequence ID" value="XM_639651.1"/>
</dbReference>
<dbReference type="SMR" id="Q556W2"/>
<dbReference type="FunCoup" id="Q556W2">
    <property type="interactions" value="7"/>
</dbReference>
<dbReference type="PaxDb" id="44689-DDB0214901"/>
<dbReference type="EnsemblProtists" id="EAL70581">
    <property type="protein sequence ID" value="EAL70581"/>
    <property type="gene ID" value="DDB_G0273781"/>
</dbReference>
<dbReference type="EnsemblProtists" id="EAL70754">
    <property type="protein sequence ID" value="EAL70754"/>
    <property type="gene ID" value="DDB_G0273073"/>
</dbReference>
<dbReference type="GeneID" id="8618843"/>
<dbReference type="GeneID" id="8619133"/>
<dbReference type="KEGG" id="ddi:DDB_G0273073"/>
<dbReference type="KEGG" id="ddi:DDB_G0273781"/>
<dbReference type="dictyBase" id="DDB_G0273073">
    <property type="gene designation" value="abcG17-1"/>
</dbReference>
<dbReference type="dictyBase" id="DDB_G0273781">
    <property type="gene designation" value="abcG17-2"/>
</dbReference>
<dbReference type="VEuPathDB" id="AmoebaDB:DDB_G0273781"/>
<dbReference type="eggNOG" id="KOG0065">
    <property type="taxonomic scope" value="Eukaryota"/>
</dbReference>
<dbReference type="HOGENOM" id="CLU_000604_35_0_1"/>
<dbReference type="InParanoid" id="Q556W2"/>
<dbReference type="OMA" id="DAGNGMC"/>
<dbReference type="PhylomeDB" id="Q556W2"/>
<dbReference type="PRO" id="PR:Q556W2"/>
<dbReference type="Proteomes" id="UP000002195">
    <property type="component" value="Chromosome 2"/>
</dbReference>
<dbReference type="GO" id="GO:0016020">
    <property type="term" value="C:membrane"/>
    <property type="evidence" value="ECO:0007669"/>
    <property type="project" value="UniProtKB-SubCell"/>
</dbReference>
<dbReference type="GO" id="GO:0140359">
    <property type="term" value="F:ABC-type transporter activity"/>
    <property type="evidence" value="ECO:0007669"/>
    <property type="project" value="InterPro"/>
</dbReference>
<dbReference type="GO" id="GO:0005524">
    <property type="term" value="F:ATP binding"/>
    <property type="evidence" value="ECO:0007669"/>
    <property type="project" value="UniProtKB-KW"/>
</dbReference>
<dbReference type="GO" id="GO:0016887">
    <property type="term" value="F:ATP hydrolysis activity"/>
    <property type="evidence" value="ECO:0007669"/>
    <property type="project" value="InterPro"/>
</dbReference>
<dbReference type="GO" id="GO:0042626">
    <property type="term" value="F:ATPase-coupled transmembrane transporter activity"/>
    <property type="evidence" value="ECO:0000317"/>
    <property type="project" value="dictyBase"/>
</dbReference>
<dbReference type="GO" id="GO:0031152">
    <property type="term" value="P:aggregation involved in sorocarp development"/>
    <property type="evidence" value="ECO:0000318"/>
    <property type="project" value="GO_Central"/>
</dbReference>
<dbReference type="GO" id="GO:0031288">
    <property type="term" value="P:sorocarp morphogenesis"/>
    <property type="evidence" value="ECO:0000315"/>
    <property type="project" value="dictyBase"/>
</dbReference>
<dbReference type="CDD" id="cd03233">
    <property type="entry name" value="ABCG_PDR_domain1"/>
    <property type="match status" value="1"/>
</dbReference>
<dbReference type="CDD" id="cd03232">
    <property type="entry name" value="ABCG_PDR_domain2"/>
    <property type="match status" value="1"/>
</dbReference>
<dbReference type="FunFam" id="3.40.50.300:FF:000054">
    <property type="entry name" value="ABC multidrug transporter atrF"/>
    <property type="match status" value="1"/>
</dbReference>
<dbReference type="Gene3D" id="3.40.50.300">
    <property type="entry name" value="P-loop containing nucleotide triphosphate hydrolases"/>
    <property type="match status" value="2"/>
</dbReference>
<dbReference type="InterPro" id="IPR003593">
    <property type="entry name" value="AAA+_ATPase"/>
</dbReference>
<dbReference type="InterPro" id="IPR013525">
    <property type="entry name" value="ABC2_TM"/>
</dbReference>
<dbReference type="InterPro" id="IPR003439">
    <property type="entry name" value="ABC_transporter-like_ATP-bd"/>
</dbReference>
<dbReference type="InterPro" id="IPR043926">
    <property type="entry name" value="ABCG_dom"/>
</dbReference>
<dbReference type="InterPro" id="IPR034001">
    <property type="entry name" value="ABCG_PDR_1"/>
</dbReference>
<dbReference type="InterPro" id="IPR034003">
    <property type="entry name" value="ABCG_PDR_2"/>
</dbReference>
<dbReference type="InterPro" id="IPR027417">
    <property type="entry name" value="P-loop_NTPase"/>
</dbReference>
<dbReference type="InterPro" id="IPR010929">
    <property type="entry name" value="PDR_CDR_ABC"/>
</dbReference>
<dbReference type="PANTHER" id="PTHR19241">
    <property type="entry name" value="ATP-BINDING CASSETTE TRANSPORTER"/>
    <property type="match status" value="1"/>
</dbReference>
<dbReference type="Pfam" id="PF01061">
    <property type="entry name" value="ABC2_membrane"/>
    <property type="match status" value="2"/>
</dbReference>
<dbReference type="Pfam" id="PF19055">
    <property type="entry name" value="ABC2_membrane_7"/>
    <property type="match status" value="2"/>
</dbReference>
<dbReference type="Pfam" id="PF00005">
    <property type="entry name" value="ABC_tran"/>
    <property type="match status" value="2"/>
</dbReference>
<dbReference type="Pfam" id="PF06422">
    <property type="entry name" value="PDR_CDR"/>
    <property type="match status" value="2"/>
</dbReference>
<dbReference type="SMART" id="SM00382">
    <property type="entry name" value="AAA"/>
    <property type="match status" value="2"/>
</dbReference>
<dbReference type="SUPFAM" id="SSF52540">
    <property type="entry name" value="P-loop containing nucleoside triphosphate hydrolases"/>
    <property type="match status" value="2"/>
</dbReference>
<dbReference type="PROSITE" id="PS50893">
    <property type="entry name" value="ABC_TRANSPORTER_2"/>
    <property type="match status" value="2"/>
</dbReference>
<keyword id="KW-0067">ATP-binding</keyword>
<keyword id="KW-0175">Coiled coil</keyword>
<keyword id="KW-0472">Membrane</keyword>
<keyword id="KW-0547">Nucleotide-binding</keyword>
<keyword id="KW-1185">Reference proteome</keyword>
<keyword id="KW-0677">Repeat</keyword>
<keyword id="KW-0812">Transmembrane</keyword>
<keyword id="KW-1133">Transmembrane helix</keyword>
<keyword id="KW-0813">Transport</keyword>
<accession>Q556W2</accession>
<accession>Q8T676</accession>
<feature type="chain" id="PRO_0000391402" description="ABC transporter G family member 17">
    <location>
        <begin position="1"/>
        <end position="1476"/>
    </location>
</feature>
<feature type="transmembrane region" description="Helical" evidence="1">
    <location>
        <begin position="517"/>
        <end position="537"/>
    </location>
</feature>
<feature type="transmembrane region" description="Helical" evidence="1">
    <location>
        <begin position="547"/>
        <end position="567"/>
    </location>
</feature>
<feature type="transmembrane region" description="Helical" evidence="1">
    <location>
        <begin position="592"/>
        <end position="612"/>
    </location>
</feature>
<feature type="transmembrane region" description="Helical" evidence="1">
    <location>
        <begin position="623"/>
        <end position="643"/>
    </location>
</feature>
<feature type="transmembrane region" description="Helical" evidence="1">
    <location>
        <begin position="764"/>
        <end position="784"/>
    </location>
</feature>
<feature type="transmembrane region" description="Helical" evidence="1">
    <location>
        <begin position="1182"/>
        <end position="1202"/>
    </location>
</feature>
<feature type="transmembrane region" description="Helical" evidence="1">
    <location>
        <begin position="1219"/>
        <end position="1239"/>
    </location>
</feature>
<feature type="transmembrane region" description="Helical" evidence="1">
    <location>
        <begin position="1260"/>
        <end position="1280"/>
    </location>
</feature>
<feature type="transmembrane region" description="Helical" evidence="1">
    <location>
        <begin position="1298"/>
        <end position="1318"/>
    </location>
</feature>
<feature type="transmembrane region" description="Helical" evidence="1">
    <location>
        <begin position="1322"/>
        <end position="1342"/>
    </location>
</feature>
<feature type="transmembrane region" description="Helical" evidence="1">
    <location>
        <begin position="1450"/>
        <end position="1470"/>
    </location>
</feature>
<feature type="domain" description="ABC transporter 1" evidence="2">
    <location>
        <begin position="151"/>
        <end position="402"/>
    </location>
</feature>
<feature type="domain" description="ABC transmembrane type-2 1">
    <location>
        <begin position="507"/>
        <end position="751"/>
    </location>
</feature>
<feature type="domain" description="ABC transporter 2" evidence="2">
    <location>
        <begin position="838"/>
        <end position="1082"/>
    </location>
</feature>
<feature type="domain" description="ABC transmembrane type-2 2">
    <location>
        <begin position="1182"/>
        <end position="1405"/>
    </location>
</feature>
<feature type="region of interest" description="Disordered" evidence="3">
    <location>
        <begin position="13"/>
        <end position="45"/>
    </location>
</feature>
<feature type="region of interest" description="Disordered" evidence="3">
    <location>
        <begin position="68"/>
        <end position="91"/>
    </location>
</feature>
<feature type="coiled-coil region" evidence="1">
    <location>
        <begin position="14"/>
        <end position="67"/>
    </location>
</feature>
<feature type="compositionally biased region" description="Low complexity" evidence="3">
    <location>
        <begin position="15"/>
        <end position="39"/>
    </location>
</feature>
<feature type="binding site" evidence="2">
    <location>
        <begin position="874"/>
        <end position="881"/>
    </location>
    <ligand>
        <name>ATP</name>
        <dbReference type="ChEBI" id="CHEBI:30616"/>
    </ligand>
</feature>
<feature type="sequence conflict" description="In Ref. 1; AAL91502." evidence="4" ref="1">
    <original>E</original>
    <variation>G</variation>
    <location>
        <position position="2"/>
    </location>
</feature>
<reference key="1">
    <citation type="journal article" date="2002" name="Eukaryot. Cell">
        <title>Evolutionary analyses of ABC transporters of Dictyostelium discoideum.</title>
        <authorList>
            <person name="Anjard C."/>
            <person name="Loomis W.F."/>
        </authorList>
    </citation>
    <scope>NUCLEOTIDE SEQUENCE [GENOMIC DNA]</scope>
    <scope>NOMENCLATURE</scope>
    <source>
        <strain>AX4</strain>
    </source>
</reference>
<reference key="2">
    <citation type="journal article" date="2002" name="Nature">
        <title>Sequence and analysis of chromosome 2 of Dictyostelium discoideum.</title>
        <authorList>
            <person name="Gloeckner G."/>
            <person name="Eichinger L."/>
            <person name="Szafranski K."/>
            <person name="Pachebat J.A."/>
            <person name="Bankier A.T."/>
            <person name="Dear P.H."/>
            <person name="Lehmann R."/>
            <person name="Baumgart C."/>
            <person name="Parra G."/>
            <person name="Abril J.F."/>
            <person name="Guigo R."/>
            <person name="Kumpf K."/>
            <person name="Tunggal B."/>
            <person name="Cox E.C."/>
            <person name="Quail M.A."/>
            <person name="Platzer M."/>
            <person name="Rosenthal A."/>
            <person name="Noegel A.A."/>
        </authorList>
    </citation>
    <scope>NUCLEOTIDE SEQUENCE [LARGE SCALE GENOMIC DNA]</scope>
    <source>
        <strain>AX4</strain>
    </source>
</reference>
<reference key="3">
    <citation type="journal article" date="2005" name="Nature">
        <title>The genome of the social amoeba Dictyostelium discoideum.</title>
        <authorList>
            <person name="Eichinger L."/>
            <person name="Pachebat J.A."/>
            <person name="Gloeckner G."/>
            <person name="Rajandream M.A."/>
            <person name="Sucgang R."/>
            <person name="Berriman M."/>
            <person name="Song J."/>
            <person name="Olsen R."/>
            <person name="Szafranski K."/>
            <person name="Xu Q."/>
            <person name="Tunggal B."/>
            <person name="Kummerfeld S."/>
            <person name="Madera M."/>
            <person name="Konfortov B.A."/>
            <person name="Rivero F."/>
            <person name="Bankier A.T."/>
            <person name="Lehmann R."/>
            <person name="Hamlin N."/>
            <person name="Davies R."/>
            <person name="Gaudet P."/>
            <person name="Fey P."/>
            <person name="Pilcher K."/>
            <person name="Chen G."/>
            <person name="Saunders D."/>
            <person name="Sodergren E.J."/>
            <person name="Davis P."/>
            <person name="Kerhornou A."/>
            <person name="Nie X."/>
            <person name="Hall N."/>
            <person name="Anjard C."/>
            <person name="Hemphill L."/>
            <person name="Bason N."/>
            <person name="Farbrother P."/>
            <person name="Desany B."/>
            <person name="Just E."/>
            <person name="Morio T."/>
            <person name="Rost R."/>
            <person name="Churcher C.M."/>
            <person name="Cooper J."/>
            <person name="Haydock S."/>
            <person name="van Driessche N."/>
            <person name="Cronin A."/>
            <person name="Goodhead I."/>
            <person name="Muzny D.M."/>
            <person name="Mourier T."/>
            <person name="Pain A."/>
            <person name="Lu M."/>
            <person name="Harper D."/>
            <person name="Lindsay R."/>
            <person name="Hauser H."/>
            <person name="James K.D."/>
            <person name="Quiles M."/>
            <person name="Madan Babu M."/>
            <person name="Saito T."/>
            <person name="Buchrieser C."/>
            <person name="Wardroper A."/>
            <person name="Felder M."/>
            <person name="Thangavelu M."/>
            <person name="Johnson D."/>
            <person name="Knights A."/>
            <person name="Loulseged H."/>
            <person name="Mungall K.L."/>
            <person name="Oliver K."/>
            <person name="Price C."/>
            <person name="Quail M.A."/>
            <person name="Urushihara H."/>
            <person name="Hernandez J."/>
            <person name="Rabbinowitsch E."/>
            <person name="Steffen D."/>
            <person name="Sanders M."/>
            <person name="Ma J."/>
            <person name="Kohara Y."/>
            <person name="Sharp S."/>
            <person name="Simmonds M.N."/>
            <person name="Spiegler S."/>
            <person name="Tivey A."/>
            <person name="Sugano S."/>
            <person name="White B."/>
            <person name="Walker D."/>
            <person name="Woodward J.R."/>
            <person name="Winckler T."/>
            <person name="Tanaka Y."/>
            <person name="Shaulsky G."/>
            <person name="Schleicher M."/>
            <person name="Weinstock G.M."/>
            <person name="Rosenthal A."/>
            <person name="Cox E.C."/>
            <person name="Chisholm R.L."/>
            <person name="Gibbs R.A."/>
            <person name="Loomis W.F."/>
            <person name="Platzer M."/>
            <person name="Kay R.R."/>
            <person name="Williams J.G."/>
            <person name="Dear P.H."/>
            <person name="Noegel A.A."/>
            <person name="Barrell B.G."/>
            <person name="Kuspa A."/>
        </authorList>
    </citation>
    <scope>NUCLEOTIDE SEQUENCE [LARGE SCALE GENOMIC DNA]</scope>
    <source>
        <strain>AX4</strain>
    </source>
</reference>
<name>ABCGH_DICDI</name>
<comment type="subcellular location">
    <subcellularLocation>
        <location evidence="4">Membrane</location>
        <topology evidence="4">Multi-pass membrane protein</topology>
    </subcellularLocation>
</comment>
<comment type="similarity">
    <text evidence="4">Belongs to the ABC transporter superfamily. ABCG family. PDR (TC 3.A.1.205) subfamily.</text>
</comment>
<comment type="caution">
    <text evidence="4">The gene for this protein is duplicated in strains AX3 and AX4. These strains contain a duplication of a segment of 750 kb of chromosome 2 compared to the corresponding sequence in strain AX2.</text>
</comment>